<reference key="1">
    <citation type="journal article" date="2003" name="Oncogene">
        <title>Large-scale identification and characterization of human genes that activate NF-kappaB and MAPK signaling pathways.</title>
        <authorList>
            <person name="Matsuda A."/>
            <person name="Suzuki Y."/>
            <person name="Honda G."/>
            <person name="Muramatsu S."/>
            <person name="Matsuzaki O."/>
            <person name="Nagano Y."/>
            <person name="Doi T."/>
            <person name="Shimotohno K."/>
            <person name="Harada T."/>
            <person name="Nishida E."/>
            <person name="Hayashi H."/>
            <person name="Sugano S."/>
        </authorList>
    </citation>
    <scope>NUCLEOTIDE SEQUENCE [LARGE SCALE MRNA]</scope>
    <scope>FUNCTION</scope>
    <source>
        <tissue>Lung</tissue>
    </source>
</reference>
<reference key="2">
    <citation type="journal article" date="2004" name="Nat. Genet.">
        <title>Complete sequencing and characterization of 21,243 full-length human cDNAs.</title>
        <authorList>
            <person name="Ota T."/>
            <person name="Suzuki Y."/>
            <person name="Nishikawa T."/>
            <person name="Otsuki T."/>
            <person name="Sugiyama T."/>
            <person name="Irie R."/>
            <person name="Wakamatsu A."/>
            <person name="Hayashi K."/>
            <person name="Sato H."/>
            <person name="Nagai K."/>
            <person name="Kimura K."/>
            <person name="Makita H."/>
            <person name="Sekine M."/>
            <person name="Obayashi M."/>
            <person name="Nishi T."/>
            <person name="Shibahara T."/>
            <person name="Tanaka T."/>
            <person name="Ishii S."/>
            <person name="Yamamoto J."/>
            <person name="Saito K."/>
            <person name="Kawai Y."/>
            <person name="Isono Y."/>
            <person name="Nakamura Y."/>
            <person name="Nagahari K."/>
            <person name="Murakami K."/>
            <person name="Yasuda T."/>
            <person name="Iwayanagi T."/>
            <person name="Wagatsuma M."/>
            <person name="Shiratori A."/>
            <person name="Sudo H."/>
            <person name="Hosoiri T."/>
            <person name="Kaku Y."/>
            <person name="Kodaira H."/>
            <person name="Kondo H."/>
            <person name="Sugawara M."/>
            <person name="Takahashi M."/>
            <person name="Kanda K."/>
            <person name="Yokoi T."/>
            <person name="Furuya T."/>
            <person name="Kikkawa E."/>
            <person name="Omura Y."/>
            <person name="Abe K."/>
            <person name="Kamihara K."/>
            <person name="Katsuta N."/>
            <person name="Sato K."/>
            <person name="Tanikawa M."/>
            <person name="Yamazaki M."/>
            <person name="Ninomiya K."/>
            <person name="Ishibashi T."/>
            <person name="Yamashita H."/>
            <person name="Murakawa K."/>
            <person name="Fujimori K."/>
            <person name="Tanai H."/>
            <person name="Kimata M."/>
            <person name="Watanabe M."/>
            <person name="Hiraoka S."/>
            <person name="Chiba Y."/>
            <person name="Ishida S."/>
            <person name="Ono Y."/>
            <person name="Takiguchi S."/>
            <person name="Watanabe S."/>
            <person name="Yosida M."/>
            <person name="Hotuta T."/>
            <person name="Kusano J."/>
            <person name="Kanehori K."/>
            <person name="Takahashi-Fujii A."/>
            <person name="Hara H."/>
            <person name="Tanase T.-O."/>
            <person name="Nomura Y."/>
            <person name="Togiya S."/>
            <person name="Komai F."/>
            <person name="Hara R."/>
            <person name="Takeuchi K."/>
            <person name="Arita M."/>
            <person name="Imose N."/>
            <person name="Musashino K."/>
            <person name="Yuuki H."/>
            <person name="Oshima A."/>
            <person name="Sasaki N."/>
            <person name="Aotsuka S."/>
            <person name="Yoshikawa Y."/>
            <person name="Matsunawa H."/>
            <person name="Ichihara T."/>
            <person name="Shiohata N."/>
            <person name="Sano S."/>
            <person name="Moriya S."/>
            <person name="Momiyama H."/>
            <person name="Satoh N."/>
            <person name="Takami S."/>
            <person name="Terashima Y."/>
            <person name="Suzuki O."/>
            <person name="Nakagawa S."/>
            <person name="Senoh A."/>
            <person name="Mizoguchi H."/>
            <person name="Goto Y."/>
            <person name="Shimizu F."/>
            <person name="Wakebe H."/>
            <person name="Hishigaki H."/>
            <person name="Watanabe T."/>
            <person name="Sugiyama A."/>
            <person name="Takemoto M."/>
            <person name="Kawakami B."/>
            <person name="Yamazaki M."/>
            <person name="Watanabe K."/>
            <person name="Kumagai A."/>
            <person name="Itakura S."/>
            <person name="Fukuzumi Y."/>
            <person name="Fujimori Y."/>
            <person name="Komiyama M."/>
            <person name="Tashiro H."/>
            <person name="Tanigami A."/>
            <person name="Fujiwara T."/>
            <person name="Ono T."/>
            <person name="Yamada K."/>
            <person name="Fujii Y."/>
            <person name="Ozaki K."/>
            <person name="Hirao M."/>
            <person name="Ohmori Y."/>
            <person name="Kawabata A."/>
            <person name="Hikiji T."/>
            <person name="Kobatake N."/>
            <person name="Inagaki H."/>
            <person name="Ikema Y."/>
            <person name="Okamoto S."/>
            <person name="Okitani R."/>
            <person name="Kawakami T."/>
            <person name="Noguchi S."/>
            <person name="Itoh T."/>
            <person name="Shigeta K."/>
            <person name="Senba T."/>
            <person name="Matsumura K."/>
            <person name="Nakajima Y."/>
            <person name="Mizuno T."/>
            <person name="Morinaga M."/>
            <person name="Sasaki M."/>
            <person name="Togashi T."/>
            <person name="Oyama M."/>
            <person name="Hata H."/>
            <person name="Watanabe M."/>
            <person name="Komatsu T."/>
            <person name="Mizushima-Sugano J."/>
            <person name="Satoh T."/>
            <person name="Shirai Y."/>
            <person name="Takahashi Y."/>
            <person name="Nakagawa K."/>
            <person name="Okumura K."/>
            <person name="Nagase T."/>
            <person name="Nomura N."/>
            <person name="Kikuchi H."/>
            <person name="Masuho Y."/>
            <person name="Yamashita R."/>
            <person name="Nakai K."/>
            <person name="Yada T."/>
            <person name="Nakamura Y."/>
            <person name="Ohara O."/>
            <person name="Isogai T."/>
            <person name="Sugano S."/>
        </authorList>
    </citation>
    <scope>NUCLEOTIDE SEQUENCE [LARGE SCALE MRNA]</scope>
    <source>
        <tissue>Skeletal muscle</tissue>
    </source>
</reference>
<reference key="3">
    <citation type="journal article" date="2004" name="Genome Res.">
        <title>The status, quality, and expansion of the NIH full-length cDNA project: the Mammalian Gene Collection (MGC).</title>
        <authorList>
            <consortium name="The MGC Project Team"/>
        </authorList>
    </citation>
    <scope>NUCLEOTIDE SEQUENCE [LARGE SCALE MRNA]</scope>
    <source>
        <tissue>Prostate</tissue>
        <tissue>Testis</tissue>
    </source>
</reference>
<reference key="4">
    <citation type="journal article" date="2018" name="Dev. Cell">
        <title>A Proximity Labeling Strategy Provides Insights into the Composition and Dynamics of Lipid Droplet Proteomes.</title>
        <authorList>
            <person name="Bersuker K."/>
            <person name="Peterson C.W.H."/>
            <person name="To M."/>
            <person name="Sahl S.J."/>
            <person name="Savikhin V."/>
            <person name="Grossman E.A."/>
            <person name="Nomura D.K."/>
            <person name="Olzmann J.A."/>
        </authorList>
    </citation>
    <scope>SUBCELLULAR LOCATION</scope>
    <scope>INTERACTION WITH DERL1 AND AMFR</scope>
    <scope>DEGRADATION</scope>
</reference>
<reference key="5">
    <citation type="journal article" date="2022" name="Hum. Genet.">
        <title>C18orf32 loss-of-function is associated with a neurodevelopmental disorder with hypotonia and contractures.</title>
        <authorList>
            <person name="Salian S."/>
            <person name="Guo X.Y."/>
            <person name="Murakami Y."/>
            <person name="Kinoshita T."/>
            <person name="Kaur P."/>
            <person name="Shukla A."/>
            <person name="Girisha K.M."/>
            <person name="Fujita M."/>
            <person name="Campeau P.M."/>
        </authorList>
    </citation>
    <scope>INVOLVEMENT IN GPIBD25</scope>
    <scope>SUBCELLULAR LOCATION</scope>
</reference>
<name>CR032_HUMAN</name>
<comment type="function">
    <text evidence="2">May activate the NF-kappa-B signaling pathway.</text>
</comment>
<comment type="subunit">
    <text evidence="3">Interacts with DERL1 and AMFR.</text>
</comment>
<comment type="subcellular location">
    <subcellularLocation>
        <location evidence="3 4">Endoplasmic reticulum</location>
    </subcellularLocation>
    <subcellularLocation>
        <location evidence="3">Lipid droplet</location>
    </subcellularLocation>
</comment>
<comment type="PTM">
    <text evidence="3">Undergoes ER-associated degradation (ERAD).</text>
</comment>
<comment type="disease" evidence="4">
    <disease id="DI-06475">
        <name>Glycosylphosphatidylinositol biosynthesis defect 25</name>
        <acronym>GPIBD25</acronym>
        <description>An autosomal recessive disorder with onset in early infancy and characterized by global developmental delay with almost no milestone achievement, brain anomalies, hypotonia, and contractures. Death may occur in early childhood.</description>
        <dbReference type="MIM" id="619985"/>
    </disease>
    <text>The disease may be caused by variants affecting the gene represented in this entry.</text>
</comment>
<comment type="similarity">
    <text evidence="5">Belongs to the UPF0729 family.</text>
</comment>
<keyword id="KW-0256">Endoplasmic reticulum</keyword>
<keyword id="KW-0551">Lipid droplet</keyword>
<keyword id="KW-1267">Proteomics identification</keyword>
<keyword id="KW-1185">Reference proteome</keyword>
<accession>Q8TCD1</accession>
<gene>
    <name type="primary">C18orf32</name>
</gene>
<organism>
    <name type="scientific">Homo sapiens</name>
    <name type="common">Human</name>
    <dbReference type="NCBI Taxonomy" id="9606"/>
    <lineage>
        <taxon>Eukaryota</taxon>
        <taxon>Metazoa</taxon>
        <taxon>Chordata</taxon>
        <taxon>Craniata</taxon>
        <taxon>Vertebrata</taxon>
        <taxon>Euteleostomi</taxon>
        <taxon>Mammalia</taxon>
        <taxon>Eutheria</taxon>
        <taxon>Euarchontoglires</taxon>
        <taxon>Primates</taxon>
        <taxon>Haplorrhini</taxon>
        <taxon>Catarrhini</taxon>
        <taxon>Hominidae</taxon>
        <taxon>Homo</taxon>
    </lineage>
</organism>
<sequence length="76" mass="8669">MVCIPCIVIPVLLWIYKKFLEPYIYPLVSPFVSRIWPKKAIQESNDTNKGKVNFKGADMNGLPTKGPTEICDKKKD</sequence>
<feature type="chain" id="PRO_0000321908" description="UPF0729 protein C18orf32">
    <location>
        <begin position="1"/>
        <end position="76"/>
    </location>
</feature>
<feature type="region of interest" description="Necessary for its localzation to the endoplasmic reticulum and lipid droplets">
    <location>
        <begin position="1"/>
        <end position="37"/>
    </location>
</feature>
<feature type="region of interest" description="Disordered" evidence="1">
    <location>
        <begin position="46"/>
        <end position="76"/>
    </location>
</feature>
<feature type="sequence variant" id="VAR_039374" description="In dbSNP:rs11537626.">
    <original>P</original>
    <variation>H</variation>
    <location>
        <position position="37"/>
    </location>
</feature>
<evidence type="ECO:0000256" key="1">
    <source>
        <dbReference type="SAM" id="MobiDB-lite"/>
    </source>
</evidence>
<evidence type="ECO:0000269" key="2">
    <source>
    </source>
</evidence>
<evidence type="ECO:0000269" key="3">
    <source>
    </source>
</evidence>
<evidence type="ECO:0000269" key="4">
    <source>
    </source>
</evidence>
<evidence type="ECO:0000305" key="5"/>
<dbReference type="EMBL" id="AB097012">
    <property type="protein sequence ID" value="BAC77365.1"/>
    <property type="molecule type" value="mRNA"/>
</dbReference>
<dbReference type="EMBL" id="AK291882">
    <property type="protein sequence ID" value="BAF84571.1"/>
    <property type="molecule type" value="mRNA"/>
</dbReference>
<dbReference type="EMBL" id="BC022357">
    <property type="protein sequence ID" value="AAH22357.1"/>
    <property type="molecule type" value="mRNA"/>
</dbReference>
<dbReference type="EMBL" id="BC093004">
    <property type="protein sequence ID" value="AAH93004.1"/>
    <property type="molecule type" value="mRNA"/>
</dbReference>
<dbReference type="CCDS" id="CCDS32831.1"/>
<dbReference type="RefSeq" id="NP_001030177.1">
    <property type="nucleotide sequence ID" value="NM_001035005.4"/>
</dbReference>
<dbReference type="RefSeq" id="NP_001186275.1">
    <property type="nucleotide sequence ID" value="NM_001199346.2"/>
</dbReference>
<dbReference type="BioGRID" id="139005">
    <property type="interactions" value="13"/>
</dbReference>
<dbReference type="FunCoup" id="Q8TCD1">
    <property type="interactions" value="533"/>
</dbReference>
<dbReference type="IntAct" id="Q8TCD1">
    <property type="interactions" value="7"/>
</dbReference>
<dbReference type="MINT" id="Q8TCD1"/>
<dbReference type="STRING" id="9606.ENSP00000480941"/>
<dbReference type="iPTMnet" id="Q8TCD1"/>
<dbReference type="PhosphoSitePlus" id="Q8TCD1"/>
<dbReference type="BioMuta" id="C18orf32"/>
<dbReference type="jPOST" id="Q8TCD1"/>
<dbReference type="MassIVE" id="Q8TCD1"/>
<dbReference type="PeptideAtlas" id="Q8TCD1"/>
<dbReference type="ProteomicsDB" id="74120"/>
<dbReference type="Pumba" id="Q8TCD1"/>
<dbReference type="Antibodypedia" id="42028">
    <property type="antibodies" value="33 antibodies from 15 providers"/>
</dbReference>
<dbReference type="DNASU" id="497661"/>
<dbReference type="Ensembl" id="ENST00000318240.8">
    <property type="protein sequence ID" value="ENSP00000323199.3"/>
    <property type="gene ID" value="ENSG00000177576.12"/>
</dbReference>
<dbReference type="Ensembl" id="ENST00000582392.2">
    <property type="protein sequence ID" value="ENSP00000462538.1"/>
    <property type="gene ID" value="ENSG00000177576.12"/>
</dbReference>
<dbReference type="Ensembl" id="ENST00000613385.4">
    <property type="protein sequence ID" value="ENSP00000480941.1"/>
    <property type="gene ID" value="ENSG00000177576.12"/>
</dbReference>
<dbReference type="GeneID" id="497661"/>
<dbReference type="KEGG" id="hsa:497661"/>
<dbReference type="MANE-Select" id="ENST00000318240.8">
    <property type="protein sequence ID" value="ENSP00000323199.3"/>
    <property type="RefSeq nucleotide sequence ID" value="NM_001035005.4"/>
    <property type="RefSeq protein sequence ID" value="NP_001030177.1"/>
</dbReference>
<dbReference type="UCSC" id="uc002ldk.3">
    <property type="organism name" value="human"/>
</dbReference>
<dbReference type="AGR" id="HGNC:31690"/>
<dbReference type="CTD" id="497661"/>
<dbReference type="DisGeNET" id="497661"/>
<dbReference type="GeneCards" id="C18orf32"/>
<dbReference type="HGNC" id="HGNC:31690">
    <property type="gene designation" value="C18orf32"/>
</dbReference>
<dbReference type="HPA" id="ENSG00000177576">
    <property type="expression patterns" value="Tissue enhanced (brain)"/>
</dbReference>
<dbReference type="MalaCards" id="C18orf32"/>
<dbReference type="MIM" id="619979">
    <property type="type" value="gene"/>
</dbReference>
<dbReference type="MIM" id="619985">
    <property type="type" value="phenotype"/>
</dbReference>
<dbReference type="neXtProt" id="NX_Q8TCD1"/>
<dbReference type="PharmGKB" id="PA162378602"/>
<dbReference type="VEuPathDB" id="HostDB:ENSG00000177576"/>
<dbReference type="GeneTree" id="ENSGT00390000018741"/>
<dbReference type="HOGENOM" id="CLU_191635_0_0_1"/>
<dbReference type="InParanoid" id="Q8TCD1"/>
<dbReference type="OMA" id="SRIWPGK"/>
<dbReference type="OrthoDB" id="10062823at2759"/>
<dbReference type="PAN-GO" id="Q8TCD1">
    <property type="GO annotations" value="0 GO annotations based on evolutionary models"/>
</dbReference>
<dbReference type="PhylomeDB" id="Q8TCD1"/>
<dbReference type="TreeFam" id="TF324662"/>
<dbReference type="PathwayCommons" id="Q8TCD1"/>
<dbReference type="SignaLink" id="Q8TCD1"/>
<dbReference type="BioGRID-ORCS" id="497661">
    <property type="hits" value="18 hits in 1054 CRISPR screens"/>
</dbReference>
<dbReference type="GenomeRNAi" id="497661"/>
<dbReference type="Pharos" id="Q8TCD1">
    <property type="development level" value="Tdark"/>
</dbReference>
<dbReference type="PRO" id="PR:Q8TCD1"/>
<dbReference type="Proteomes" id="UP000005640">
    <property type="component" value="Chromosome 18"/>
</dbReference>
<dbReference type="RNAct" id="Q8TCD1">
    <property type="molecule type" value="protein"/>
</dbReference>
<dbReference type="Bgee" id="ENSG00000177576">
    <property type="expression patterns" value="Expressed in monocyte and 99 other cell types or tissues"/>
</dbReference>
<dbReference type="GO" id="GO:0005783">
    <property type="term" value="C:endoplasmic reticulum"/>
    <property type="evidence" value="ECO:0000314"/>
    <property type="project" value="UniProtKB"/>
</dbReference>
<dbReference type="GO" id="GO:0005811">
    <property type="term" value="C:lipid droplet"/>
    <property type="evidence" value="ECO:0000314"/>
    <property type="project" value="UniProtKB"/>
</dbReference>
<dbReference type="GO" id="GO:0043123">
    <property type="term" value="P:positive regulation of canonical NF-kappaB signal transduction"/>
    <property type="evidence" value="ECO:0007001"/>
    <property type="project" value="UniProtKB"/>
</dbReference>
<dbReference type="InterPro" id="IPR026776">
    <property type="entry name" value="UPF0729_C18orf32-like"/>
</dbReference>
<dbReference type="PANTHER" id="PTHR13456">
    <property type="entry name" value="UPF0729 PROTEIN C18ORF32"/>
    <property type="match status" value="1"/>
</dbReference>
<dbReference type="PANTHER" id="PTHR13456:SF0">
    <property type="entry name" value="UPF0729 PROTEIN C18ORF32"/>
    <property type="match status" value="1"/>
</dbReference>
<dbReference type="Pfam" id="PF14975">
    <property type="entry name" value="DUF4512"/>
    <property type="match status" value="1"/>
</dbReference>
<proteinExistence type="evidence at protein level"/>
<protein>
    <recommendedName>
        <fullName>UPF0729 protein C18orf32</fullName>
    </recommendedName>
    <alternativeName>
        <fullName>Putative NF-kappa-B-activating protein 200</fullName>
    </alternativeName>
</protein>